<gene>
    <name evidence="1" type="primary">lipB</name>
    <name type="ordered locus">Tbd_0269</name>
</gene>
<dbReference type="EC" id="2.3.1.181" evidence="1"/>
<dbReference type="EMBL" id="CP000116">
    <property type="protein sequence ID" value="AAZ96222.1"/>
    <property type="molecule type" value="Genomic_DNA"/>
</dbReference>
<dbReference type="RefSeq" id="WP_011310782.1">
    <property type="nucleotide sequence ID" value="NC_007404.1"/>
</dbReference>
<dbReference type="SMR" id="Q3SM28"/>
<dbReference type="STRING" id="292415.Tbd_0269"/>
<dbReference type="KEGG" id="tbd:Tbd_0269"/>
<dbReference type="eggNOG" id="COG0321">
    <property type="taxonomic scope" value="Bacteria"/>
</dbReference>
<dbReference type="HOGENOM" id="CLU_035168_3_1_4"/>
<dbReference type="OrthoDB" id="9787061at2"/>
<dbReference type="UniPathway" id="UPA00538">
    <property type="reaction ID" value="UER00592"/>
</dbReference>
<dbReference type="Proteomes" id="UP000008291">
    <property type="component" value="Chromosome"/>
</dbReference>
<dbReference type="GO" id="GO:0005737">
    <property type="term" value="C:cytoplasm"/>
    <property type="evidence" value="ECO:0007669"/>
    <property type="project" value="UniProtKB-SubCell"/>
</dbReference>
<dbReference type="GO" id="GO:0033819">
    <property type="term" value="F:lipoyl(octanoyl) transferase activity"/>
    <property type="evidence" value="ECO:0007669"/>
    <property type="project" value="UniProtKB-EC"/>
</dbReference>
<dbReference type="GO" id="GO:0036211">
    <property type="term" value="P:protein modification process"/>
    <property type="evidence" value="ECO:0007669"/>
    <property type="project" value="InterPro"/>
</dbReference>
<dbReference type="CDD" id="cd16444">
    <property type="entry name" value="LipB"/>
    <property type="match status" value="1"/>
</dbReference>
<dbReference type="FunFam" id="3.30.930.10:FF:000020">
    <property type="entry name" value="Octanoyltransferase"/>
    <property type="match status" value="1"/>
</dbReference>
<dbReference type="Gene3D" id="3.30.930.10">
    <property type="entry name" value="Bira Bifunctional Protein, Domain 2"/>
    <property type="match status" value="1"/>
</dbReference>
<dbReference type="HAMAP" id="MF_00013">
    <property type="entry name" value="LipB"/>
    <property type="match status" value="1"/>
</dbReference>
<dbReference type="InterPro" id="IPR045864">
    <property type="entry name" value="aa-tRNA-synth_II/BPL/LPL"/>
</dbReference>
<dbReference type="InterPro" id="IPR004143">
    <property type="entry name" value="BPL_LPL_catalytic"/>
</dbReference>
<dbReference type="InterPro" id="IPR000544">
    <property type="entry name" value="Octanoyltransferase"/>
</dbReference>
<dbReference type="InterPro" id="IPR020605">
    <property type="entry name" value="Octanoyltransferase_CS"/>
</dbReference>
<dbReference type="NCBIfam" id="TIGR00214">
    <property type="entry name" value="lipB"/>
    <property type="match status" value="1"/>
</dbReference>
<dbReference type="NCBIfam" id="NF010922">
    <property type="entry name" value="PRK14342.1"/>
    <property type="match status" value="1"/>
</dbReference>
<dbReference type="NCBIfam" id="NF010925">
    <property type="entry name" value="PRK14345.1"/>
    <property type="match status" value="1"/>
</dbReference>
<dbReference type="PANTHER" id="PTHR10993:SF7">
    <property type="entry name" value="LIPOYLTRANSFERASE 2, MITOCHONDRIAL-RELATED"/>
    <property type="match status" value="1"/>
</dbReference>
<dbReference type="PANTHER" id="PTHR10993">
    <property type="entry name" value="OCTANOYLTRANSFERASE"/>
    <property type="match status" value="1"/>
</dbReference>
<dbReference type="Pfam" id="PF21948">
    <property type="entry name" value="LplA-B_cat"/>
    <property type="match status" value="1"/>
</dbReference>
<dbReference type="PIRSF" id="PIRSF016262">
    <property type="entry name" value="LPLase"/>
    <property type="match status" value="1"/>
</dbReference>
<dbReference type="SUPFAM" id="SSF55681">
    <property type="entry name" value="Class II aaRS and biotin synthetases"/>
    <property type="match status" value="1"/>
</dbReference>
<dbReference type="PROSITE" id="PS51733">
    <property type="entry name" value="BPL_LPL_CATALYTIC"/>
    <property type="match status" value="1"/>
</dbReference>
<dbReference type="PROSITE" id="PS01313">
    <property type="entry name" value="LIPB"/>
    <property type="match status" value="1"/>
</dbReference>
<sequence>MNGAAPIIPDVRVEPDPSLVVRQLGRVAYEPTWRAMQAFAAQRSAGTADELWLLEHPPVYTLGQAGKREHLIAATDIPVVPIDRGGQITYHGPGQVVAYVLVDLRRRGYGIRELVARLEQAVIDLLAASNVEATRRAGAPGVYVDGAKIAALGLRVKHGCTYHGLAFNVDMDLEPFAAINPCGYPGMAVTQCRDLGLNWSVEQTERALTDALQRAIYS</sequence>
<name>LIPB_THIDA</name>
<comment type="function">
    <text evidence="1">Catalyzes the transfer of endogenously produced octanoic acid from octanoyl-acyl-carrier-protein onto the lipoyl domains of lipoate-dependent enzymes. Lipoyl-ACP can also act as a substrate although octanoyl-ACP is likely to be the physiological substrate.</text>
</comment>
<comment type="catalytic activity">
    <reaction evidence="1">
        <text>octanoyl-[ACP] + L-lysyl-[protein] = N(6)-octanoyl-L-lysyl-[protein] + holo-[ACP] + H(+)</text>
        <dbReference type="Rhea" id="RHEA:17665"/>
        <dbReference type="Rhea" id="RHEA-COMP:9636"/>
        <dbReference type="Rhea" id="RHEA-COMP:9685"/>
        <dbReference type="Rhea" id="RHEA-COMP:9752"/>
        <dbReference type="Rhea" id="RHEA-COMP:9928"/>
        <dbReference type="ChEBI" id="CHEBI:15378"/>
        <dbReference type="ChEBI" id="CHEBI:29969"/>
        <dbReference type="ChEBI" id="CHEBI:64479"/>
        <dbReference type="ChEBI" id="CHEBI:78463"/>
        <dbReference type="ChEBI" id="CHEBI:78809"/>
        <dbReference type="EC" id="2.3.1.181"/>
    </reaction>
</comment>
<comment type="pathway">
    <text evidence="1">Protein modification; protein lipoylation via endogenous pathway; protein N(6)-(lipoyl)lysine from octanoyl-[acyl-carrier-protein]: step 1/2.</text>
</comment>
<comment type="subcellular location">
    <subcellularLocation>
        <location evidence="1">Cytoplasm</location>
    </subcellularLocation>
</comment>
<comment type="miscellaneous">
    <text evidence="1">In the reaction, the free carboxyl group of octanoic acid is attached via an amide linkage to the epsilon-amino group of a specific lysine residue of lipoyl domains of lipoate-dependent enzymes.</text>
</comment>
<comment type="similarity">
    <text evidence="1">Belongs to the LipB family.</text>
</comment>
<feature type="chain" id="PRO_0000242778" description="Octanoyltransferase">
    <location>
        <begin position="1"/>
        <end position="218"/>
    </location>
</feature>
<feature type="domain" description="BPL/LPL catalytic" evidence="2">
    <location>
        <begin position="45"/>
        <end position="218"/>
    </location>
</feature>
<feature type="active site" description="Acyl-thioester intermediate" evidence="1">
    <location>
        <position position="182"/>
    </location>
</feature>
<feature type="binding site" evidence="1">
    <location>
        <begin position="84"/>
        <end position="91"/>
    </location>
    <ligand>
        <name>substrate</name>
    </ligand>
</feature>
<feature type="binding site" evidence="1">
    <location>
        <begin position="151"/>
        <end position="153"/>
    </location>
    <ligand>
        <name>substrate</name>
    </ligand>
</feature>
<feature type="binding site" evidence="1">
    <location>
        <begin position="164"/>
        <end position="166"/>
    </location>
    <ligand>
        <name>substrate</name>
    </ligand>
</feature>
<feature type="site" description="Lowers pKa of active site Cys" evidence="1">
    <location>
        <position position="148"/>
    </location>
</feature>
<proteinExistence type="inferred from homology"/>
<evidence type="ECO:0000255" key="1">
    <source>
        <dbReference type="HAMAP-Rule" id="MF_00013"/>
    </source>
</evidence>
<evidence type="ECO:0000255" key="2">
    <source>
        <dbReference type="PROSITE-ProRule" id="PRU01067"/>
    </source>
</evidence>
<reference key="1">
    <citation type="journal article" date="2006" name="J. Bacteriol.">
        <title>The genome sequence of the obligately chemolithoautotrophic, facultatively anaerobic bacterium Thiobacillus denitrificans.</title>
        <authorList>
            <person name="Beller H.R."/>
            <person name="Chain P.S."/>
            <person name="Letain T.E."/>
            <person name="Chakicherla A."/>
            <person name="Larimer F.W."/>
            <person name="Richardson P.M."/>
            <person name="Coleman M.A."/>
            <person name="Wood A.P."/>
            <person name="Kelly D.P."/>
        </authorList>
    </citation>
    <scope>NUCLEOTIDE SEQUENCE [LARGE SCALE GENOMIC DNA]</scope>
    <source>
        <strain>ATCC 25259 / T1</strain>
    </source>
</reference>
<accession>Q3SM28</accession>
<keyword id="KW-0012">Acyltransferase</keyword>
<keyword id="KW-0963">Cytoplasm</keyword>
<keyword id="KW-1185">Reference proteome</keyword>
<keyword id="KW-0808">Transferase</keyword>
<organism>
    <name type="scientific">Thiobacillus denitrificans (strain ATCC 25259 / T1)</name>
    <dbReference type="NCBI Taxonomy" id="292415"/>
    <lineage>
        <taxon>Bacteria</taxon>
        <taxon>Pseudomonadati</taxon>
        <taxon>Pseudomonadota</taxon>
        <taxon>Betaproteobacteria</taxon>
        <taxon>Nitrosomonadales</taxon>
        <taxon>Thiobacillaceae</taxon>
        <taxon>Thiobacillus</taxon>
    </lineage>
</organism>
<protein>
    <recommendedName>
        <fullName evidence="1">Octanoyltransferase</fullName>
        <ecNumber evidence="1">2.3.1.181</ecNumber>
    </recommendedName>
    <alternativeName>
        <fullName evidence="1">Lipoate-protein ligase B</fullName>
    </alternativeName>
    <alternativeName>
        <fullName evidence="1">Lipoyl/octanoyl transferase</fullName>
    </alternativeName>
    <alternativeName>
        <fullName evidence="1">Octanoyl-[acyl-carrier-protein]-protein N-octanoyltransferase</fullName>
    </alternativeName>
</protein>